<evidence type="ECO:0000255" key="1">
    <source>
        <dbReference type="HAMAP-Rule" id="MF_00011"/>
    </source>
</evidence>
<reference key="1">
    <citation type="journal article" date="2005" name="Genome Res.">
        <title>Comparative and functional genomic analyses of the pathogenicity of phytopathogen Xanthomonas campestris pv. campestris.</title>
        <authorList>
            <person name="Qian W."/>
            <person name="Jia Y."/>
            <person name="Ren S.-X."/>
            <person name="He Y.-Q."/>
            <person name="Feng J.-X."/>
            <person name="Lu L.-F."/>
            <person name="Sun Q."/>
            <person name="Ying G."/>
            <person name="Tang D.-J."/>
            <person name="Tang H."/>
            <person name="Wu W."/>
            <person name="Hao P."/>
            <person name="Wang L."/>
            <person name="Jiang B.-L."/>
            <person name="Zeng S."/>
            <person name="Gu W.-Y."/>
            <person name="Lu G."/>
            <person name="Rong L."/>
            <person name="Tian Y."/>
            <person name="Yao Z."/>
            <person name="Fu G."/>
            <person name="Chen B."/>
            <person name="Fang R."/>
            <person name="Qiang B."/>
            <person name="Chen Z."/>
            <person name="Zhao G.-P."/>
            <person name="Tang J.-L."/>
            <person name="He C."/>
        </authorList>
    </citation>
    <scope>NUCLEOTIDE SEQUENCE [LARGE SCALE GENOMIC DNA]</scope>
    <source>
        <strain>8004</strain>
    </source>
</reference>
<accession>Q4URT6</accession>
<dbReference type="EC" id="6.3.4.4" evidence="1"/>
<dbReference type="EMBL" id="CP000050">
    <property type="protein sequence ID" value="AAY50237.1"/>
    <property type="molecule type" value="Genomic_DNA"/>
</dbReference>
<dbReference type="RefSeq" id="WP_011036253.1">
    <property type="nucleotide sequence ID" value="NZ_CP155948.1"/>
</dbReference>
<dbReference type="SMR" id="Q4URT6"/>
<dbReference type="KEGG" id="xcb:XC_3193"/>
<dbReference type="HOGENOM" id="CLU_029848_0_0_6"/>
<dbReference type="UniPathway" id="UPA00075">
    <property type="reaction ID" value="UER00335"/>
</dbReference>
<dbReference type="Proteomes" id="UP000000420">
    <property type="component" value="Chromosome"/>
</dbReference>
<dbReference type="GO" id="GO:0005737">
    <property type="term" value="C:cytoplasm"/>
    <property type="evidence" value="ECO:0007669"/>
    <property type="project" value="UniProtKB-SubCell"/>
</dbReference>
<dbReference type="GO" id="GO:0004019">
    <property type="term" value="F:adenylosuccinate synthase activity"/>
    <property type="evidence" value="ECO:0007669"/>
    <property type="project" value="UniProtKB-UniRule"/>
</dbReference>
<dbReference type="GO" id="GO:0005525">
    <property type="term" value="F:GTP binding"/>
    <property type="evidence" value="ECO:0007669"/>
    <property type="project" value="UniProtKB-UniRule"/>
</dbReference>
<dbReference type="GO" id="GO:0000287">
    <property type="term" value="F:magnesium ion binding"/>
    <property type="evidence" value="ECO:0007669"/>
    <property type="project" value="UniProtKB-UniRule"/>
</dbReference>
<dbReference type="GO" id="GO:0044208">
    <property type="term" value="P:'de novo' AMP biosynthetic process"/>
    <property type="evidence" value="ECO:0007669"/>
    <property type="project" value="UniProtKB-UniRule"/>
</dbReference>
<dbReference type="GO" id="GO:0046040">
    <property type="term" value="P:IMP metabolic process"/>
    <property type="evidence" value="ECO:0007669"/>
    <property type="project" value="TreeGrafter"/>
</dbReference>
<dbReference type="CDD" id="cd03108">
    <property type="entry name" value="AdSS"/>
    <property type="match status" value="1"/>
</dbReference>
<dbReference type="FunFam" id="1.10.300.10:FF:000001">
    <property type="entry name" value="Adenylosuccinate synthetase"/>
    <property type="match status" value="1"/>
</dbReference>
<dbReference type="FunFam" id="3.90.170.10:FF:000001">
    <property type="entry name" value="Adenylosuccinate synthetase"/>
    <property type="match status" value="1"/>
</dbReference>
<dbReference type="Gene3D" id="3.40.440.10">
    <property type="entry name" value="Adenylosuccinate Synthetase, subunit A, domain 1"/>
    <property type="match status" value="1"/>
</dbReference>
<dbReference type="Gene3D" id="1.10.300.10">
    <property type="entry name" value="Adenylosuccinate Synthetase, subunit A, domain 2"/>
    <property type="match status" value="1"/>
</dbReference>
<dbReference type="Gene3D" id="3.90.170.10">
    <property type="entry name" value="Adenylosuccinate Synthetase, subunit A, domain 3"/>
    <property type="match status" value="1"/>
</dbReference>
<dbReference type="HAMAP" id="MF_00011">
    <property type="entry name" value="Adenylosucc_synth"/>
    <property type="match status" value="1"/>
</dbReference>
<dbReference type="InterPro" id="IPR018220">
    <property type="entry name" value="Adenylosuccin_syn_GTP-bd"/>
</dbReference>
<dbReference type="InterPro" id="IPR033128">
    <property type="entry name" value="Adenylosuccin_syn_Lys_AS"/>
</dbReference>
<dbReference type="InterPro" id="IPR042109">
    <property type="entry name" value="Adenylosuccinate_synth_dom1"/>
</dbReference>
<dbReference type="InterPro" id="IPR042110">
    <property type="entry name" value="Adenylosuccinate_synth_dom2"/>
</dbReference>
<dbReference type="InterPro" id="IPR042111">
    <property type="entry name" value="Adenylosuccinate_synth_dom3"/>
</dbReference>
<dbReference type="InterPro" id="IPR001114">
    <property type="entry name" value="Adenylosuccinate_synthetase"/>
</dbReference>
<dbReference type="InterPro" id="IPR027417">
    <property type="entry name" value="P-loop_NTPase"/>
</dbReference>
<dbReference type="NCBIfam" id="NF002223">
    <property type="entry name" value="PRK01117.1"/>
    <property type="match status" value="1"/>
</dbReference>
<dbReference type="NCBIfam" id="TIGR00184">
    <property type="entry name" value="purA"/>
    <property type="match status" value="1"/>
</dbReference>
<dbReference type="PANTHER" id="PTHR11846">
    <property type="entry name" value="ADENYLOSUCCINATE SYNTHETASE"/>
    <property type="match status" value="1"/>
</dbReference>
<dbReference type="PANTHER" id="PTHR11846:SF0">
    <property type="entry name" value="ADENYLOSUCCINATE SYNTHETASE"/>
    <property type="match status" value="1"/>
</dbReference>
<dbReference type="Pfam" id="PF00709">
    <property type="entry name" value="Adenylsucc_synt"/>
    <property type="match status" value="1"/>
</dbReference>
<dbReference type="SMART" id="SM00788">
    <property type="entry name" value="Adenylsucc_synt"/>
    <property type="match status" value="1"/>
</dbReference>
<dbReference type="SUPFAM" id="SSF52540">
    <property type="entry name" value="P-loop containing nucleoside triphosphate hydrolases"/>
    <property type="match status" value="1"/>
</dbReference>
<dbReference type="PROSITE" id="PS01266">
    <property type="entry name" value="ADENYLOSUCCIN_SYN_1"/>
    <property type="match status" value="1"/>
</dbReference>
<dbReference type="PROSITE" id="PS00513">
    <property type="entry name" value="ADENYLOSUCCIN_SYN_2"/>
    <property type="match status" value="1"/>
</dbReference>
<comment type="function">
    <text evidence="1">Plays an important role in the de novo pathway of purine nucleotide biosynthesis. Catalyzes the first committed step in the biosynthesis of AMP from IMP.</text>
</comment>
<comment type="catalytic activity">
    <reaction evidence="1">
        <text>IMP + L-aspartate + GTP = N(6)-(1,2-dicarboxyethyl)-AMP + GDP + phosphate + 2 H(+)</text>
        <dbReference type="Rhea" id="RHEA:15753"/>
        <dbReference type="ChEBI" id="CHEBI:15378"/>
        <dbReference type="ChEBI" id="CHEBI:29991"/>
        <dbReference type="ChEBI" id="CHEBI:37565"/>
        <dbReference type="ChEBI" id="CHEBI:43474"/>
        <dbReference type="ChEBI" id="CHEBI:57567"/>
        <dbReference type="ChEBI" id="CHEBI:58053"/>
        <dbReference type="ChEBI" id="CHEBI:58189"/>
        <dbReference type="EC" id="6.3.4.4"/>
    </reaction>
</comment>
<comment type="cofactor">
    <cofactor evidence="1">
        <name>Mg(2+)</name>
        <dbReference type="ChEBI" id="CHEBI:18420"/>
    </cofactor>
    <text evidence="1">Binds 1 Mg(2+) ion per subunit.</text>
</comment>
<comment type="pathway">
    <text evidence="1">Purine metabolism; AMP biosynthesis via de novo pathway; AMP from IMP: step 1/2.</text>
</comment>
<comment type="subunit">
    <text evidence="1">Homodimer.</text>
</comment>
<comment type="subcellular location">
    <subcellularLocation>
        <location evidence="1">Cytoplasm</location>
    </subcellularLocation>
</comment>
<comment type="similarity">
    <text evidence="1">Belongs to the adenylosuccinate synthetase family.</text>
</comment>
<name>PURA_XANC8</name>
<organism>
    <name type="scientific">Xanthomonas campestris pv. campestris (strain 8004)</name>
    <dbReference type="NCBI Taxonomy" id="314565"/>
    <lineage>
        <taxon>Bacteria</taxon>
        <taxon>Pseudomonadati</taxon>
        <taxon>Pseudomonadota</taxon>
        <taxon>Gammaproteobacteria</taxon>
        <taxon>Lysobacterales</taxon>
        <taxon>Lysobacteraceae</taxon>
        <taxon>Xanthomonas</taxon>
    </lineage>
</organism>
<keyword id="KW-0963">Cytoplasm</keyword>
<keyword id="KW-0342">GTP-binding</keyword>
<keyword id="KW-0436">Ligase</keyword>
<keyword id="KW-0460">Magnesium</keyword>
<keyword id="KW-0479">Metal-binding</keyword>
<keyword id="KW-0547">Nucleotide-binding</keyword>
<keyword id="KW-0658">Purine biosynthesis</keyword>
<feature type="chain" id="PRO_0000224335" description="Adenylosuccinate synthetase">
    <location>
        <begin position="1"/>
        <end position="430"/>
    </location>
</feature>
<feature type="active site" description="Proton acceptor" evidence="1">
    <location>
        <position position="14"/>
    </location>
</feature>
<feature type="active site" description="Proton donor" evidence="1">
    <location>
        <position position="42"/>
    </location>
</feature>
<feature type="binding site" evidence="1">
    <location>
        <begin position="13"/>
        <end position="19"/>
    </location>
    <ligand>
        <name>GTP</name>
        <dbReference type="ChEBI" id="CHEBI:37565"/>
    </ligand>
</feature>
<feature type="binding site" description="in other chain" evidence="1">
    <location>
        <begin position="14"/>
        <end position="17"/>
    </location>
    <ligand>
        <name>IMP</name>
        <dbReference type="ChEBI" id="CHEBI:58053"/>
        <note>ligand shared between dimeric partners</note>
    </ligand>
</feature>
<feature type="binding site" evidence="1">
    <location>
        <position position="14"/>
    </location>
    <ligand>
        <name>Mg(2+)</name>
        <dbReference type="ChEBI" id="CHEBI:18420"/>
    </ligand>
</feature>
<feature type="binding site" description="in other chain" evidence="1">
    <location>
        <begin position="39"/>
        <end position="42"/>
    </location>
    <ligand>
        <name>IMP</name>
        <dbReference type="ChEBI" id="CHEBI:58053"/>
        <note>ligand shared between dimeric partners</note>
    </ligand>
</feature>
<feature type="binding site" evidence="1">
    <location>
        <begin position="41"/>
        <end position="43"/>
    </location>
    <ligand>
        <name>GTP</name>
        <dbReference type="ChEBI" id="CHEBI:37565"/>
    </ligand>
</feature>
<feature type="binding site" evidence="1">
    <location>
        <position position="41"/>
    </location>
    <ligand>
        <name>Mg(2+)</name>
        <dbReference type="ChEBI" id="CHEBI:18420"/>
    </ligand>
</feature>
<feature type="binding site" description="in other chain" evidence="1">
    <location>
        <position position="130"/>
    </location>
    <ligand>
        <name>IMP</name>
        <dbReference type="ChEBI" id="CHEBI:58053"/>
        <note>ligand shared between dimeric partners</note>
    </ligand>
</feature>
<feature type="binding site" evidence="1">
    <location>
        <position position="144"/>
    </location>
    <ligand>
        <name>IMP</name>
        <dbReference type="ChEBI" id="CHEBI:58053"/>
        <note>ligand shared between dimeric partners</note>
    </ligand>
</feature>
<feature type="binding site" description="in other chain" evidence="1">
    <location>
        <position position="225"/>
    </location>
    <ligand>
        <name>IMP</name>
        <dbReference type="ChEBI" id="CHEBI:58053"/>
        <note>ligand shared between dimeric partners</note>
    </ligand>
</feature>
<feature type="binding site" description="in other chain" evidence="1">
    <location>
        <position position="240"/>
    </location>
    <ligand>
        <name>IMP</name>
        <dbReference type="ChEBI" id="CHEBI:58053"/>
        <note>ligand shared between dimeric partners</note>
    </ligand>
</feature>
<feature type="binding site" evidence="1">
    <location>
        <begin position="300"/>
        <end position="306"/>
    </location>
    <ligand>
        <name>substrate</name>
    </ligand>
</feature>
<feature type="binding site" description="in other chain" evidence="1">
    <location>
        <position position="304"/>
    </location>
    <ligand>
        <name>IMP</name>
        <dbReference type="ChEBI" id="CHEBI:58053"/>
        <note>ligand shared between dimeric partners</note>
    </ligand>
</feature>
<feature type="binding site" evidence="1">
    <location>
        <position position="306"/>
    </location>
    <ligand>
        <name>GTP</name>
        <dbReference type="ChEBI" id="CHEBI:37565"/>
    </ligand>
</feature>
<feature type="binding site" evidence="1">
    <location>
        <begin position="332"/>
        <end position="334"/>
    </location>
    <ligand>
        <name>GTP</name>
        <dbReference type="ChEBI" id="CHEBI:37565"/>
    </ligand>
</feature>
<feature type="binding site" evidence="1">
    <location>
        <begin position="414"/>
        <end position="416"/>
    </location>
    <ligand>
        <name>GTP</name>
        <dbReference type="ChEBI" id="CHEBI:37565"/>
    </ligand>
</feature>
<sequence length="430" mass="46164">MGQSVVVLGAQWGDEGKGKIVDLLTEEIGAVVRFQGGHNAGHTLVINGKKTVLHLIPSGILRDDALCLIGNGVVISPAALIKEIGELESAGVEVRSRLKISPAAPLIMPYHIALDQAREKAAGGKAIGTTGRGIGPAYEDKVARRGIRIADLHYPAQLEELLRTALDYHNFVLTKYLGVEAVDFQKTFDEALAFGEYVQPMKSDVAGILHDLRKQGKRVLFEGAQGALLDIDHGTYPYVTSSNTTVGGALAGTGVGADAIDYVLGIAKAYATRVGGGPFPTELDDEVGQGIRDRGAEYGASTGRPRRCGWMDIVALKRAVAINGISGLCITKLDVLDGMEKLKVCIAYEYRGKRTEYAPLDAQGWEECTPVYLEFPGWTENTHGITEWDKLPVAARAYLRALEELAGCPISIVSTGPDRDHTMVLQDPFA</sequence>
<protein>
    <recommendedName>
        <fullName evidence="1">Adenylosuccinate synthetase</fullName>
        <shortName evidence="1">AMPSase</shortName>
        <shortName evidence="1">AdSS</shortName>
        <ecNumber evidence="1">6.3.4.4</ecNumber>
    </recommendedName>
    <alternativeName>
        <fullName evidence="1">IMP--aspartate ligase</fullName>
    </alternativeName>
</protein>
<proteinExistence type="inferred from homology"/>
<gene>
    <name evidence="1" type="primary">purA</name>
    <name type="ordered locus">XC_3193</name>
</gene>